<feature type="signal peptide" evidence="2">
    <location>
        <begin position="1"/>
        <end position="23"/>
    </location>
</feature>
<feature type="chain" id="PRO_0000319620" description="Peroxidasin homolog">
    <location>
        <begin position="24"/>
        <end position="1475"/>
    </location>
</feature>
<feature type="chain" id="PRO_0000455176" description="PXDN active fragment" evidence="1">
    <location>
        <begin position="24"/>
        <end position="1333"/>
    </location>
</feature>
<feature type="domain" description="LRRNT">
    <location>
        <begin position="24"/>
        <end position="60"/>
    </location>
</feature>
<feature type="repeat" description="LRR 1" evidence="2">
    <location>
        <begin position="58"/>
        <end position="81"/>
    </location>
</feature>
<feature type="repeat" description="LRR 2" evidence="2">
    <location>
        <begin position="82"/>
        <end position="105"/>
    </location>
</feature>
<feature type="repeat" description="LRR 3" evidence="2">
    <location>
        <begin position="107"/>
        <end position="129"/>
    </location>
</feature>
<feature type="repeat" description="LRR 4" evidence="2">
    <location>
        <begin position="130"/>
        <end position="153"/>
    </location>
</feature>
<feature type="repeat" description="LRR 5" evidence="2">
    <location>
        <begin position="154"/>
        <end position="177"/>
    </location>
</feature>
<feature type="repeat" description="LRR 6" evidence="2">
    <location>
        <begin position="179"/>
        <end position="201"/>
    </location>
</feature>
<feature type="domain" description="LRRCT" evidence="2">
    <location>
        <begin position="189"/>
        <end position="241"/>
    </location>
</feature>
<feature type="domain" description="Ig-like C2-type 1" evidence="3">
    <location>
        <begin position="243"/>
        <end position="329"/>
    </location>
</feature>
<feature type="domain" description="Ig-like C2-type 2" evidence="3">
    <location>
        <begin position="339"/>
        <end position="425"/>
    </location>
</feature>
<feature type="repeat" description="LRR 7" evidence="2">
    <location>
        <begin position="402"/>
        <end position="425"/>
    </location>
</feature>
<feature type="domain" description="Ig-like C2-type 3" evidence="3">
    <location>
        <begin position="430"/>
        <end position="517"/>
    </location>
</feature>
<feature type="domain" description="Ig-like C2-type 4" evidence="3">
    <location>
        <begin position="518"/>
        <end position="607"/>
    </location>
</feature>
<feature type="repeat" description="LRR 8" evidence="2">
    <location>
        <begin position="1148"/>
        <end position="1172"/>
    </location>
</feature>
<feature type="repeat" description="LRR 9" evidence="2">
    <location>
        <begin position="1267"/>
        <end position="1288"/>
    </location>
</feature>
<feature type="domain" description="VWFC" evidence="4">
    <location>
        <begin position="1409"/>
        <end position="1467"/>
    </location>
</feature>
<feature type="region of interest" description="Required in homotrimerization" evidence="1">
    <location>
        <begin position="1312"/>
        <end position="1407"/>
    </location>
</feature>
<feature type="active site" description="Proton acceptor" evidence="5">
    <location>
        <position position="824"/>
    </location>
</feature>
<feature type="binding site" description="covalent" evidence="5">
    <location>
        <position position="823"/>
    </location>
    <ligand>
        <name>heme b</name>
        <dbReference type="ChEBI" id="CHEBI:60344"/>
    </ligand>
</feature>
<feature type="binding site" evidence="5">
    <location>
        <position position="825"/>
    </location>
    <ligand>
        <name>Ca(2+)</name>
        <dbReference type="ChEBI" id="CHEBI:29108"/>
    </ligand>
</feature>
<feature type="binding site" evidence="5">
    <location>
        <position position="904"/>
    </location>
    <ligand>
        <name>Ca(2+)</name>
        <dbReference type="ChEBI" id="CHEBI:29108"/>
    </ligand>
</feature>
<feature type="binding site" evidence="5">
    <location>
        <position position="906"/>
    </location>
    <ligand>
        <name>Ca(2+)</name>
        <dbReference type="ChEBI" id="CHEBI:29108"/>
    </ligand>
</feature>
<feature type="binding site" evidence="5">
    <location>
        <position position="908"/>
    </location>
    <ligand>
        <name>Ca(2+)</name>
        <dbReference type="ChEBI" id="CHEBI:29108"/>
    </ligand>
</feature>
<feature type="binding site" evidence="5">
    <location>
        <position position="910"/>
    </location>
    <ligand>
        <name>Ca(2+)</name>
        <dbReference type="ChEBI" id="CHEBI:29108"/>
    </ligand>
</feature>
<feature type="binding site" description="covalent" evidence="5">
    <location>
        <position position="977"/>
    </location>
    <ligand>
        <name>heme b</name>
        <dbReference type="ChEBI" id="CHEBI:60344"/>
    </ligand>
</feature>
<feature type="binding site" description="axial binding residue" evidence="5">
    <location>
        <position position="1071"/>
    </location>
    <ligand>
        <name>heme b</name>
        <dbReference type="ChEBI" id="CHEBI:60344"/>
    </ligand>
    <ligandPart>
        <name>Fe</name>
        <dbReference type="ChEBI" id="CHEBI:18248"/>
    </ligandPart>
</feature>
<feature type="site" description="Transition state stabilizer" evidence="5">
    <location>
        <position position="974"/>
    </location>
</feature>
<feature type="site" description="Cleavage; by FURIN" evidence="1">
    <location>
        <position position="1333"/>
    </location>
</feature>
<feature type="modified residue" description="Phosphotyrosine" evidence="1">
    <location>
        <position position="1173"/>
    </location>
</feature>
<feature type="modified residue" description="Phosphoserine" evidence="1">
    <location>
        <position position="1177"/>
    </location>
</feature>
<feature type="glycosylation site" description="N-linked (GlcNAc...) asparagine" evidence="2">
    <location>
        <position position="387"/>
    </location>
</feature>
<feature type="glycosylation site" description="N-linked (GlcNAc...) asparagine" evidence="1 2">
    <location>
        <position position="637"/>
    </location>
</feature>
<feature type="glycosylation site" description="N-linked (GlcNAc...) asparagine" evidence="1 2">
    <location>
        <position position="696"/>
    </location>
</feature>
<feature type="glycosylation site" description="N-linked (GlcNAc...) asparagine" evidence="1 2">
    <location>
        <position position="716"/>
    </location>
</feature>
<feature type="glycosylation site" description="N-linked (GlcNAc...) asparagine" evidence="1 2">
    <location>
        <position position="728"/>
    </location>
</feature>
<feature type="glycosylation site" description="N-linked (GlcNAc...) asparagine" evidence="2">
    <location>
        <position position="961"/>
    </location>
</feature>
<feature type="glycosylation site" description="N-linked (GlcNAc...) asparagine" evidence="2">
    <location>
        <position position="1175"/>
    </location>
</feature>
<feature type="glycosylation site" description="N-linked (GlcNAc...) asparagine" evidence="1 2">
    <location>
        <position position="1277"/>
    </location>
</feature>
<feature type="glycosylation site" description="N-linked (GlcNAc...) asparagine" evidence="1 2">
    <location>
        <position position="1364"/>
    </location>
</feature>
<feature type="disulfide bond" evidence="1">
    <location>
        <begin position="33"/>
        <end position="39"/>
    </location>
</feature>
<feature type="disulfide bond" evidence="1">
    <location>
        <begin position="37"/>
        <end position="46"/>
    </location>
</feature>
<feature type="disulfide bond" evidence="1">
    <location>
        <begin position="193"/>
        <end position="240"/>
    </location>
</feature>
<feature type="disulfide bond" evidence="1">
    <location>
        <begin position="195"/>
        <end position="219"/>
    </location>
</feature>
<feature type="disulfide bond" evidence="1">
    <location>
        <begin position="264"/>
        <end position="314"/>
    </location>
</feature>
<feature type="disulfide bond" evidence="3">
    <location>
        <begin position="360"/>
        <end position="409"/>
    </location>
</feature>
<feature type="disulfide bond" evidence="1">
    <location>
        <begin position="451"/>
        <end position="499"/>
    </location>
</feature>
<feature type="disulfide bond" evidence="3">
    <location>
        <begin position="543"/>
        <end position="591"/>
    </location>
</feature>
<feature type="disulfide bond" evidence="1">
    <location>
        <begin position="720"/>
        <end position="882"/>
    </location>
</feature>
<feature type="disulfide bond" evidence="1">
    <location>
        <begin position="729"/>
        <end position="745"/>
    </location>
</feature>
<feature type="disulfide bond" description="Interchain (with C-1312); in homotrimer" evidence="1">
    <location>
        <position position="733"/>
    </location>
</feature>
<feature type="disulfide bond" evidence="1">
    <location>
        <begin position="844"/>
        <end position="854"/>
    </location>
</feature>
<feature type="disulfide bond" evidence="1">
    <location>
        <begin position="848"/>
        <end position="872"/>
    </location>
</feature>
<feature type="disulfide bond" evidence="3">
    <location>
        <begin position="956"/>
        <end position="967"/>
    </location>
</feature>
<feature type="disulfide bond" evidence="1">
    <location>
        <begin position="1174"/>
        <end position="1231"/>
    </location>
</feature>
<feature type="disulfide bond" evidence="1">
    <location>
        <begin position="1272"/>
        <end position="1298"/>
    </location>
</feature>
<feature type="disulfide bond" description="Interchain (with C-733); in homotrimer" evidence="1">
    <location>
        <position position="1312"/>
    </location>
</feature>
<feature type="mutagenesis site" description="Kinky tail mutant mice show kinky tail and white spot at the belly; additionally, homozygous mutants show microphthalmia and anterior segment dysgenesis including corneal opacity, severe iris bombe (forward-bowing iris) and very shallow or absent anterior chamber." evidence="11">
    <location>
        <begin position="1272"/>
        <end position="1475"/>
    </location>
</feature>
<feature type="sequence conflict" description="In Ref. 1; BAE25216." evidence="19" ref="1">
    <original>P</original>
    <variation>Q</variation>
    <location>
        <position position="549"/>
    </location>
</feature>
<feature type="sequence conflict" description="In Ref. 3; AAI12914." evidence="19" ref="3">
    <original>C</original>
    <variation>R</variation>
    <location>
        <position position="1298"/>
    </location>
</feature>
<comment type="function">
    <text evidence="1 10 11 12 13 14 15 16 17">Catalyzes the two-electron oxidation of bromide by hydrogen peroxide and generates hypobromite as a reactive intermediate which mediates the formation of sulfilimine cross-links between methionine and hydroxylysine residues within an uncross-linked collagen IV/COL4A1 NC1 hexamer (PubMed:22842973, PubMed:25708780, PubMed:28424209, PubMed:29626421, PubMed:31817535). In turns, directly contributes to the collagen IV network-dependent fibronectin/FN and laminin assembly, which is required for full extracellular matrix (ECM)-mediated signaling (By similarity). Thus, sulfilimine cross-links are essential for growth factor-induced cell proliferation and survival in endothelial cells, an event essential to basement membrane integrity (By similarity). In addition, through the bromide oxidation, may promote tubulogenesis and induce angiogenesis through ERK1/2, Akt, and FAK pathways (By similarity). Moreover brominates alpha2 collagen IV chain/COL4A2 at 'Tyr-1480' and leads to bromine enrichment of the basement membranes (PubMed:32571911, PubMed:32675287). In vitro, can also catalyze the two-electron oxidation of thiocyanate and iodide and these two substrates could effectively compete with bromide and thus inhibit the formation of sulfilimine bonds (By similarity). Binds laminins (By similarity). May play a role in the organization of eyeball structure and lens development during eye development (PubMed:24895407, PubMed:31817535).</text>
</comment>
<comment type="catalytic activity">
    <reaction evidence="10 13 14">
        <text>L-lysyl-[collagen] + L-methionyl-[collagen] + H2O2 = [collagen]-L-lysyl-N-S-L-methionyl-[collagen] + 2 H2O + H(+)</text>
        <dbReference type="Rhea" id="RHEA:66020"/>
        <dbReference type="Rhea" id="RHEA-COMP:12751"/>
        <dbReference type="Rhea" id="RHEA-COMP:16949"/>
        <dbReference type="Rhea" id="RHEA-COMP:16951"/>
        <dbReference type="ChEBI" id="CHEBI:15377"/>
        <dbReference type="ChEBI" id="CHEBI:15378"/>
        <dbReference type="ChEBI" id="CHEBI:16044"/>
        <dbReference type="ChEBI" id="CHEBI:16240"/>
        <dbReference type="ChEBI" id="CHEBI:29969"/>
        <dbReference type="ChEBI" id="CHEBI:166867"/>
    </reaction>
    <physiologicalReaction direction="left-to-right" evidence="10 13 14 15">
        <dbReference type="Rhea" id="RHEA:66021"/>
    </physiologicalReaction>
</comment>
<comment type="catalytic activity">
    <reaction evidence="10 14 16 17 21 22">
        <text>bromide + H2O2 = hypobromite + H2O</text>
        <dbReference type="Rhea" id="RHEA:66016"/>
        <dbReference type="ChEBI" id="CHEBI:15377"/>
        <dbReference type="ChEBI" id="CHEBI:15858"/>
        <dbReference type="ChEBI" id="CHEBI:16240"/>
        <dbReference type="ChEBI" id="CHEBI:29250"/>
    </reaction>
    <physiologicalReaction direction="left-to-right" evidence="13 14 15 16 17">
        <dbReference type="Rhea" id="RHEA:66017"/>
    </physiologicalReaction>
</comment>
<comment type="catalytic activity">
    <reaction evidence="10 14 21 22">
        <text>L-lysyl-[collagen] + L-methionyl-[collagen] + hypobromite = [collagen]-L-lysyl-N-S-L-methionyl-[collagen] + bromide + H2O + H(+)</text>
        <dbReference type="Rhea" id="RHEA:66024"/>
        <dbReference type="Rhea" id="RHEA-COMP:12751"/>
        <dbReference type="Rhea" id="RHEA-COMP:16949"/>
        <dbReference type="Rhea" id="RHEA-COMP:16951"/>
        <dbReference type="ChEBI" id="CHEBI:15377"/>
        <dbReference type="ChEBI" id="CHEBI:15378"/>
        <dbReference type="ChEBI" id="CHEBI:15858"/>
        <dbReference type="ChEBI" id="CHEBI:16044"/>
        <dbReference type="ChEBI" id="CHEBI:29250"/>
        <dbReference type="ChEBI" id="CHEBI:29969"/>
        <dbReference type="ChEBI" id="CHEBI:166867"/>
    </reaction>
    <physiologicalReaction direction="left-to-right" evidence="13 14 15 20">
        <dbReference type="Rhea" id="RHEA:66025"/>
    </physiologicalReaction>
</comment>
<comment type="catalytic activity">
    <reaction evidence="10">
        <text>(5R)-5-hydroxy-L-lysyl-[collagen] + L-methionyl-[collagen] + hypobromite = [collagen]-(5R)-5-hydroxy-L-lysyl-N-S-L-methionyl-[collagen] + bromide + H2O + H(+)</text>
        <dbReference type="Rhea" id="RHEA:66012"/>
        <dbReference type="Rhea" id="RHEA-COMP:12752"/>
        <dbReference type="Rhea" id="RHEA-COMP:16949"/>
        <dbReference type="Rhea" id="RHEA-COMP:16950"/>
        <dbReference type="ChEBI" id="CHEBI:15377"/>
        <dbReference type="ChEBI" id="CHEBI:15378"/>
        <dbReference type="ChEBI" id="CHEBI:15858"/>
        <dbReference type="ChEBI" id="CHEBI:16044"/>
        <dbReference type="ChEBI" id="CHEBI:29250"/>
        <dbReference type="ChEBI" id="CHEBI:133442"/>
        <dbReference type="ChEBI" id="CHEBI:166866"/>
    </reaction>
    <physiologicalReaction direction="left-to-right" evidence="20">
        <dbReference type="Rhea" id="RHEA:66013"/>
    </physiologicalReaction>
</comment>
<comment type="catalytic activity">
    <reaction evidence="10">
        <text>(5R)-5-hydroxy-L-lysyl-[collagen] + L-methionyl-[collagen] + H2O2 = [collagen]-(5R)-5-hydroxy-L-lysyl-N-S-L-methionyl-[collagen] + 2 H2O + H(+)</text>
        <dbReference type="Rhea" id="RHEA:66008"/>
        <dbReference type="Rhea" id="RHEA-COMP:12752"/>
        <dbReference type="Rhea" id="RHEA-COMP:16949"/>
        <dbReference type="Rhea" id="RHEA-COMP:16950"/>
        <dbReference type="ChEBI" id="CHEBI:15377"/>
        <dbReference type="ChEBI" id="CHEBI:15378"/>
        <dbReference type="ChEBI" id="CHEBI:16044"/>
        <dbReference type="ChEBI" id="CHEBI:16240"/>
        <dbReference type="ChEBI" id="CHEBI:133442"/>
        <dbReference type="ChEBI" id="CHEBI:166866"/>
    </reaction>
</comment>
<comment type="catalytic activity">
    <reaction evidence="16 17">
        <text>L-tyrosyl-[protein] + bromide + H2O2 + H(+) = 3-bromo-L-tyrosyl-[protein] + 2 H2O</text>
        <dbReference type="Rhea" id="RHEA:69360"/>
        <dbReference type="Rhea" id="RHEA-COMP:10136"/>
        <dbReference type="Rhea" id="RHEA-COMP:17686"/>
        <dbReference type="ChEBI" id="CHEBI:15377"/>
        <dbReference type="ChEBI" id="CHEBI:15378"/>
        <dbReference type="ChEBI" id="CHEBI:15858"/>
        <dbReference type="ChEBI" id="CHEBI:16240"/>
        <dbReference type="ChEBI" id="CHEBI:46858"/>
        <dbReference type="ChEBI" id="CHEBI:183512"/>
    </reaction>
    <physiologicalReaction direction="left-to-right" evidence="16 17">
        <dbReference type="Rhea" id="RHEA:69361"/>
    </physiologicalReaction>
</comment>
<comment type="catalytic activity">
    <reaction evidence="16 17">
        <text>hypobromite + L-tyrosyl-[protein] + H(+) = 3-bromo-L-tyrosyl-[protein] + H2O</text>
        <dbReference type="Rhea" id="RHEA:69356"/>
        <dbReference type="Rhea" id="RHEA-COMP:10136"/>
        <dbReference type="Rhea" id="RHEA-COMP:17686"/>
        <dbReference type="ChEBI" id="CHEBI:15377"/>
        <dbReference type="ChEBI" id="CHEBI:15378"/>
        <dbReference type="ChEBI" id="CHEBI:29250"/>
        <dbReference type="ChEBI" id="CHEBI:46858"/>
        <dbReference type="ChEBI" id="CHEBI:183512"/>
    </reaction>
    <physiologicalReaction direction="left-to-right" evidence="16 17">
        <dbReference type="Rhea" id="RHEA:69357"/>
    </physiologicalReaction>
</comment>
<comment type="cofactor">
    <cofactor evidence="5">
        <name>Ca(2+)</name>
        <dbReference type="ChEBI" id="CHEBI:29108"/>
    </cofactor>
    <text evidence="5">Binds 1 Ca(2+) ion per subunit.</text>
</comment>
<comment type="cofactor">
    <cofactor evidence="5">
        <name>heme b</name>
        <dbReference type="ChEBI" id="CHEBI:60344"/>
    </cofactor>
    <text evidence="5">Binds 1 heme b (iron(II)-protoporphyrin IX) group covalently per subunit.</text>
</comment>
<comment type="activity regulation">
    <text evidence="17">Thiocyanate inhibits the formation of 3-bromotyrosine.</text>
</comment>
<comment type="subunit">
    <text evidence="1">Homotrimer; disulfide-linked. The homotrimer form is predominant. Homooligomer; disulfide-linked. Oligomerization occurs intracellularly before C-terminal proteolytic cleavage (By similarity). Interacts with PXDNL; this interaction inhibits the peroxidase activity of PXDN (By similarity).</text>
</comment>
<comment type="subcellular location">
    <subcellularLocation>
        <location evidence="8">Secreted</location>
        <location evidence="8">Extracellular space</location>
        <location evidence="8">Extracellular matrix</location>
    </subcellularLocation>
    <subcellularLocation>
        <location evidence="1">Endoplasmic reticulum</location>
    </subcellularLocation>
    <subcellularLocation>
        <location evidence="1">Cell surface</location>
    </subcellularLocation>
    <subcellularLocation>
        <location evidence="10">Secreted</location>
        <location evidence="10">Extracellular space</location>
        <location evidence="10">Extracellular matrix</location>
        <location evidence="10">Basement membrane</location>
    </subcellularLocation>
    <text evidence="1">Adheres on the cell surface in 'hot spots'.</text>
</comment>
<comment type="subcellular location">
    <molecule>PXDN active fragment</molecule>
    <subcellularLocation>
        <location evidence="1">Secreted</location>
        <location evidence="1">Extracellular space</location>
        <location evidence="1">Extracellular matrix</location>
    </subcellularLocation>
</comment>
<comment type="tissue specificity">
    <text evidence="7 9 15">Highly expressed in the cardiovascular system. In the embryo, expressed in the corneal epithelial layer. In the adult eyes, expressed in the corneal and lens epithelium. Expressed in lung (PubMed:31817535).</text>
</comment>
<comment type="developmental stage">
    <text evidence="6 7">Expressed in all embryonic tissues at 10 dpc. Detected at 7 dpc (PubMed:18848646, PubMed:18929642). At 11.5 dpc, faintly expressed in the lens epithelium cells and in the anterior part of primary fiber cells. At 13.5 dpc, strongly expressed in the developing lens especially the lens epithelium cells and in the inner limiting membrane. Additionally, it is also expressed in ocular mesenchymal cells in the vitreous. At 17.5 dpc, expressed not only in the whole lens, but also in the inner neuroblast layer. In the lens, appears to be strongly expressed in the lens epithelial and at the posterior pole of the lens (PubMed:18929642).</text>
</comment>
<comment type="domain">
    <text evidence="1">The VWFC domain mediates the covalent links between monomers through disulfide bridges. Ig-like C2-type domains are required to sulfilimine bond formation. The VWFC domain is not required for trimerization. The LRR domain mediates high affinity binding to laminin-1.</text>
</comment>
<comment type="PTM">
    <text evidence="1 18">Processed by FURIN and the proteolytic processing largely depends on the peroxidase activity of PXDN (PubMed:34679700). The proteolytic cleavage occurs after intracellular homotrimerization and releases into the extracellular matrix a large, catalytically active fragment and a smaller fragment consisting primarily of the C-terminal VWFC domain. The processing enhances both peroxidase activity and sulfilimine cross-links formation (By similarity).</text>
</comment>
<comment type="disruption phenotype">
    <text evidence="15">Homozygous mice for the PXDN gene show completely or almost closed eyelids with small eyes, having no apparent external morphological defects in other organs (PubMed:31817535). In addition, mice show hair color change and the tail color is white and also have a white spot at the ventral and dorsal region at a frequency of about 94.1%. Some of mutants have severe cataracts in the eyes (PubMed:31817535).</text>
</comment>
<comment type="similarity">
    <text evidence="5">Belongs to the peroxidase family. XPO subfamily.</text>
</comment>
<reference key="1">
    <citation type="journal article" date="2005" name="Science">
        <title>The transcriptional landscape of the mammalian genome.</title>
        <authorList>
            <person name="Carninci P."/>
            <person name="Kasukawa T."/>
            <person name="Katayama S."/>
            <person name="Gough J."/>
            <person name="Frith M.C."/>
            <person name="Maeda N."/>
            <person name="Oyama R."/>
            <person name="Ravasi T."/>
            <person name="Lenhard B."/>
            <person name="Wells C."/>
            <person name="Kodzius R."/>
            <person name="Shimokawa K."/>
            <person name="Bajic V.B."/>
            <person name="Brenner S.E."/>
            <person name="Batalov S."/>
            <person name="Forrest A.R."/>
            <person name="Zavolan M."/>
            <person name="Davis M.J."/>
            <person name="Wilming L.G."/>
            <person name="Aidinis V."/>
            <person name="Allen J.E."/>
            <person name="Ambesi-Impiombato A."/>
            <person name="Apweiler R."/>
            <person name="Aturaliya R.N."/>
            <person name="Bailey T.L."/>
            <person name="Bansal M."/>
            <person name="Baxter L."/>
            <person name="Beisel K.W."/>
            <person name="Bersano T."/>
            <person name="Bono H."/>
            <person name="Chalk A.M."/>
            <person name="Chiu K.P."/>
            <person name="Choudhary V."/>
            <person name="Christoffels A."/>
            <person name="Clutterbuck D.R."/>
            <person name="Crowe M.L."/>
            <person name="Dalla E."/>
            <person name="Dalrymple B.P."/>
            <person name="de Bono B."/>
            <person name="Della Gatta G."/>
            <person name="di Bernardo D."/>
            <person name="Down T."/>
            <person name="Engstrom P."/>
            <person name="Fagiolini M."/>
            <person name="Faulkner G."/>
            <person name="Fletcher C.F."/>
            <person name="Fukushima T."/>
            <person name="Furuno M."/>
            <person name="Futaki S."/>
            <person name="Gariboldi M."/>
            <person name="Georgii-Hemming P."/>
            <person name="Gingeras T.R."/>
            <person name="Gojobori T."/>
            <person name="Green R.E."/>
            <person name="Gustincich S."/>
            <person name="Harbers M."/>
            <person name="Hayashi Y."/>
            <person name="Hensch T.K."/>
            <person name="Hirokawa N."/>
            <person name="Hill D."/>
            <person name="Huminiecki L."/>
            <person name="Iacono M."/>
            <person name="Ikeo K."/>
            <person name="Iwama A."/>
            <person name="Ishikawa T."/>
            <person name="Jakt M."/>
            <person name="Kanapin A."/>
            <person name="Katoh M."/>
            <person name="Kawasawa Y."/>
            <person name="Kelso J."/>
            <person name="Kitamura H."/>
            <person name="Kitano H."/>
            <person name="Kollias G."/>
            <person name="Krishnan S.P."/>
            <person name="Kruger A."/>
            <person name="Kummerfeld S.K."/>
            <person name="Kurochkin I.V."/>
            <person name="Lareau L.F."/>
            <person name="Lazarevic D."/>
            <person name="Lipovich L."/>
            <person name="Liu J."/>
            <person name="Liuni S."/>
            <person name="McWilliam S."/>
            <person name="Madan Babu M."/>
            <person name="Madera M."/>
            <person name="Marchionni L."/>
            <person name="Matsuda H."/>
            <person name="Matsuzawa S."/>
            <person name="Miki H."/>
            <person name="Mignone F."/>
            <person name="Miyake S."/>
            <person name="Morris K."/>
            <person name="Mottagui-Tabar S."/>
            <person name="Mulder N."/>
            <person name="Nakano N."/>
            <person name="Nakauchi H."/>
            <person name="Ng P."/>
            <person name="Nilsson R."/>
            <person name="Nishiguchi S."/>
            <person name="Nishikawa S."/>
            <person name="Nori F."/>
            <person name="Ohara O."/>
            <person name="Okazaki Y."/>
            <person name="Orlando V."/>
            <person name="Pang K.C."/>
            <person name="Pavan W.J."/>
            <person name="Pavesi G."/>
            <person name="Pesole G."/>
            <person name="Petrovsky N."/>
            <person name="Piazza S."/>
            <person name="Reed J."/>
            <person name="Reid J.F."/>
            <person name="Ring B.Z."/>
            <person name="Ringwald M."/>
            <person name="Rost B."/>
            <person name="Ruan Y."/>
            <person name="Salzberg S.L."/>
            <person name="Sandelin A."/>
            <person name="Schneider C."/>
            <person name="Schoenbach C."/>
            <person name="Sekiguchi K."/>
            <person name="Semple C.A."/>
            <person name="Seno S."/>
            <person name="Sessa L."/>
            <person name="Sheng Y."/>
            <person name="Shibata Y."/>
            <person name="Shimada H."/>
            <person name="Shimada K."/>
            <person name="Silva D."/>
            <person name="Sinclair B."/>
            <person name="Sperling S."/>
            <person name="Stupka E."/>
            <person name="Sugiura K."/>
            <person name="Sultana R."/>
            <person name="Takenaka Y."/>
            <person name="Taki K."/>
            <person name="Tammoja K."/>
            <person name="Tan S.L."/>
            <person name="Tang S."/>
            <person name="Taylor M.S."/>
            <person name="Tegner J."/>
            <person name="Teichmann S.A."/>
            <person name="Ueda H.R."/>
            <person name="van Nimwegen E."/>
            <person name="Verardo R."/>
            <person name="Wei C.L."/>
            <person name="Yagi K."/>
            <person name="Yamanishi H."/>
            <person name="Zabarovsky E."/>
            <person name="Zhu S."/>
            <person name="Zimmer A."/>
            <person name="Hide W."/>
            <person name="Bult C."/>
            <person name="Grimmond S.M."/>
            <person name="Teasdale R.D."/>
            <person name="Liu E.T."/>
            <person name="Brusic V."/>
            <person name="Quackenbush J."/>
            <person name="Wahlestedt C."/>
            <person name="Mattick J.S."/>
            <person name="Hume D.A."/>
            <person name="Kai C."/>
            <person name="Sasaki D."/>
            <person name="Tomaru Y."/>
            <person name="Fukuda S."/>
            <person name="Kanamori-Katayama M."/>
            <person name="Suzuki M."/>
            <person name="Aoki J."/>
            <person name="Arakawa T."/>
            <person name="Iida J."/>
            <person name="Imamura K."/>
            <person name="Itoh M."/>
            <person name="Kato T."/>
            <person name="Kawaji H."/>
            <person name="Kawagashira N."/>
            <person name="Kawashima T."/>
            <person name="Kojima M."/>
            <person name="Kondo S."/>
            <person name="Konno H."/>
            <person name="Nakano K."/>
            <person name="Ninomiya N."/>
            <person name="Nishio T."/>
            <person name="Okada M."/>
            <person name="Plessy C."/>
            <person name="Shibata K."/>
            <person name="Shiraki T."/>
            <person name="Suzuki S."/>
            <person name="Tagami M."/>
            <person name="Waki K."/>
            <person name="Watahiki A."/>
            <person name="Okamura-Oho Y."/>
            <person name="Suzuki H."/>
            <person name="Kawai J."/>
            <person name="Hayashizaki Y."/>
        </authorList>
    </citation>
    <scope>NUCLEOTIDE SEQUENCE [LARGE SCALE MRNA]</scope>
    <source>
        <strain>C57BL/6J</strain>
        <tissue>Head</tissue>
    </source>
</reference>
<reference key="2">
    <citation type="journal article" date="2009" name="PLoS Biol.">
        <title>Lineage-specific biology revealed by a finished genome assembly of the mouse.</title>
        <authorList>
            <person name="Church D.M."/>
            <person name="Goodstadt L."/>
            <person name="Hillier L.W."/>
            <person name="Zody M.C."/>
            <person name="Goldstein S."/>
            <person name="She X."/>
            <person name="Bult C.J."/>
            <person name="Agarwala R."/>
            <person name="Cherry J.L."/>
            <person name="DiCuccio M."/>
            <person name="Hlavina W."/>
            <person name="Kapustin Y."/>
            <person name="Meric P."/>
            <person name="Maglott D."/>
            <person name="Birtle Z."/>
            <person name="Marques A.C."/>
            <person name="Graves T."/>
            <person name="Zhou S."/>
            <person name="Teague B."/>
            <person name="Potamousis K."/>
            <person name="Churas C."/>
            <person name="Place M."/>
            <person name="Herschleb J."/>
            <person name="Runnheim R."/>
            <person name="Forrest D."/>
            <person name="Amos-Landgraf J."/>
            <person name="Schwartz D.C."/>
            <person name="Cheng Z."/>
            <person name="Lindblad-Toh K."/>
            <person name="Eichler E.E."/>
            <person name="Ponting C.P."/>
        </authorList>
    </citation>
    <scope>NUCLEOTIDE SEQUENCE [LARGE SCALE GENOMIC DNA]</scope>
    <source>
        <strain>C57BL/6J</strain>
    </source>
</reference>
<reference key="3">
    <citation type="journal article" date="2004" name="Genome Res.">
        <title>The status, quality, and expansion of the NIH full-length cDNA project: the Mammalian Gene Collection (MGC).</title>
        <authorList>
            <consortium name="The MGC Project Team"/>
        </authorList>
    </citation>
    <scope>NUCLEOTIDE SEQUENCE [LARGE SCALE MRNA] OF 370-1475</scope>
    <source>
        <strain>C57BL/6J</strain>
        <tissue>Brain</tissue>
    </source>
</reference>
<reference key="4">
    <citation type="journal article" date="2008" name="Free Radic. Biol. Med.">
        <title>Identification and characterization of VPO1, a new animal heme-containing peroxidase.</title>
        <authorList>
            <person name="Cheng G."/>
            <person name="Salerno J.C."/>
            <person name="Cao Z."/>
            <person name="Pagano P.J."/>
            <person name="Lambeth J.D."/>
        </authorList>
    </citation>
    <scope>TISSUE SPECIFICITY</scope>
    <scope>DEVELOPMENTAL STAGE</scope>
</reference>
<reference key="5">
    <citation type="journal article" date="2009" name="Am. J. Pathol.">
        <title>Peroxidasin is secreted and incorporated into the extracellular matrix of myofibroblasts and fibrotic kidney.</title>
        <authorList>
            <person name="Peterfi Z."/>
            <person name="Donko A."/>
            <person name="Orient A."/>
            <person name="Sum A."/>
            <person name="Prokai A."/>
            <person name="Molnar B."/>
            <person name="Vereb Z."/>
            <person name="Rajnavolgyi E."/>
            <person name="Kovacs K.J."/>
            <person name="Muller V."/>
            <person name="Szabo A.J."/>
            <person name="Geiszt M."/>
        </authorList>
    </citation>
    <scope>SUBCELLULAR LOCATION</scope>
</reference>
<reference key="6">
    <citation type="journal article" date="2009" name="Gene Expr. Patterns">
        <title>Expression pattern of LRR and Ig domain-containing protein (LRRIG protein) in the early mouse embryo.</title>
        <authorList>
            <person name="Homma S."/>
            <person name="Shimada T."/>
            <person name="Hikake T."/>
            <person name="Yaginuma H."/>
        </authorList>
    </citation>
    <scope>DEVELOPMENTAL STAGE</scope>
</reference>
<reference key="7">
    <citation type="journal article" date="2010" name="Cell">
        <title>A tissue-specific atlas of mouse protein phosphorylation and expression.</title>
        <authorList>
            <person name="Huttlin E.L."/>
            <person name="Jedrychowski M.P."/>
            <person name="Elias J.E."/>
            <person name="Goswami T."/>
            <person name="Rad R."/>
            <person name="Beausoleil S.A."/>
            <person name="Villen J."/>
            <person name="Haas W."/>
            <person name="Sowa M.E."/>
            <person name="Gygi S.P."/>
        </authorList>
    </citation>
    <scope>IDENTIFICATION BY MASS SPECTROMETRY [LARGE SCALE ANALYSIS]</scope>
    <source>
        <tissue>Brown adipose tissue</tissue>
        <tissue>Heart</tissue>
        <tissue>Kidney</tissue>
        <tissue>Liver</tissue>
        <tissue>Lung</tissue>
        <tissue>Pancreas</tissue>
        <tissue>Spleen</tissue>
    </source>
</reference>
<reference key="8">
    <citation type="journal article" date="2011" name="Am. J. Hum. Genet.">
        <title>Homozygous mutations in PXDN cause congenital cataract, corneal opacity, and developmental glaucoma.</title>
        <authorList>
            <person name="Khan K."/>
            <person name="Rudkin A."/>
            <person name="Parry D.A."/>
            <person name="Burdon K.P."/>
            <person name="McKibbin M."/>
            <person name="Logan C.V."/>
            <person name="Abdelhamed Z.I."/>
            <person name="Muecke J.S."/>
            <person name="Fernandez-Fuentes N."/>
            <person name="Laurie K.J."/>
            <person name="Shires M."/>
            <person name="Fogarty R."/>
            <person name="Carr I.M."/>
            <person name="Poulter J.A."/>
            <person name="Morgan J.E."/>
            <person name="Mohamed M.D."/>
            <person name="Jafri H."/>
            <person name="Raashid Y."/>
            <person name="Meng N."/>
            <person name="Piseth H."/>
            <person name="Toomes C."/>
            <person name="Casson R.J."/>
            <person name="Taylor G.R."/>
            <person name="Hammerton M."/>
            <person name="Sheridan E."/>
            <person name="Johnson C.A."/>
            <person name="Inglehearn C.F."/>
            <person name="Craig J.E."/>
            <person name="Ali M."/>
        </authorList>
    </citation>
    <scope>TISSUE SPECIFICITY</scope>
</reference>
<reference key="9">
    <citation type="journal article" date="2012" name="Nat. Chem. Biol.">
        <title>Peroxidasin forms sulfilimine chemical bonds using hypohalous acids in tissue genesis.</title>
        <authorList>
            <person name="Bhave G."/>
            <person name="Cummings C.F."/>
            <person name="Vanacore R.M."/>
            <person name="Kumagai-Cresse C."/>
            <person name="Ero-Tolliver I.A."/>
            <person name="Rafi M."/>
            <person name="Kang J.S."/>
            <person name="Pedchenko V."/>
            <person name="Fessler L.I."/>
            <person name="Fessler J.H."/>
            <person name="Hudson B.G."/>
        </authorList>
    </citation>
    <scope>SUBCELLULAR LOCATION</scope>
    <scope>CATALYTIC ACTIVITY</scope>
    <scope>FUNCTION</scope>
</reference>
<reference key="10">
    <citation type="journal article" date="2014" name="Hum. Mol. Genet.">
        <title>Peroxidasin is essential for eye development in the mouse.</title>
        <authorList>
            <person name="Yan X."/>
            <person name="Sabrautzki S."/>
            <person name="Horsch M."/>
            <person name="Fuchs H."/>
            <person name="Gailus-Durner V."/>
            <person name="Beckers J."/>
            <person name="Hrabe de Angelis M."/>
            <person name="Graw J."/>
        </authorList>
    </citation>
    <scope>FUNCTION</scope>
    <scope>DEVELOPMENTAL STAGE</scope>
    <scope>MUTAGENESIS OF 1272-CYS--PRO-1475</scope>
</reference>
<reference key="11">
    <citation type="journal article" date="2015" name="Free Radic. Biol. Med.">
        <title>Structure-function analysis of peroxidasin provides insight into the mechanism of collagen IV crosslinking.</title>
        <authorList>
            <person name="Lazar E."/>
            <person name="Peterfi Z."/>
            <person name="Sirokmany G."/>
            <person name="Kovacs H.A."/>
            <person name="Klement E."/>
            <person name="Medzihradszky K.F."/>
            <person name="Geiszt M."/>
        </authorList>
    </citation>
    <scope>FUNCTION</scope>
</reference>
<reference key="12">
    <citation type="journal article" date="2017" name="Am. J. Physiol.">
        <title>The Sulfilimine Cross-Link of Collagen IV Contributes to Kidney Tubular Basement Membrane Stiffness.</title>
        <authorList>
            <person name="Bhave G."/>
            <person name="Colon S."/>
            <person name="Ferrell N."/>
        </authorList>
    </citation>
    <scope>FUNCTION</scope>
</reference>
<reference key="13">
    <citation type="journal article" date="2018" name="Arch. Biochem. Biophys.">
        <title>Characterisation of peroxidasin activity in isolated extracellular matrix and direct detection of hypobromous acid formation.</title>
        <authorList>
            <person name="Bathish B."/>
            <person name="Turner R."/>
            <person name="Paumann-Page M."/>
            <person name="Kettle A.J."/>
            <person name="Winterbourn C.C."/>
        </authorList>
    </citation>
    <scope>FUNCTION</scope>
    <scope>CATALYTIC ACTIVITY</scope>
</reference>
<reference key="14">
    <citation type="journal article" date="2019" name="Int. J. Mol. Sci.">
        <title>Biallelic Deletion of Pxdn in Mice Leads to Anophthalmia and Severe Eye Malformation.</title>
        <authorList>
            <person name="Kim H.K."/>
            <person name="Ham K.A."/>
            <person name="Lee S.W."/>
            <person name="Choi H.S."/>
            <person name="Kim H.S."/>
            <person name="Kim H.K."/>
            <person name="Shin H.S."/>
            <person name="Seo K.Y."/>
            <person name="Cho Y."/>
            <person name="Nam K.T."/>
            <person name="Kim I.B."/>
            <person name="Joe Y.A."/>
        </authorList>
    </citation>
    <scope>DISRUPTION PHENOTYPE</scope>
    <scope>TISSUE SPECIFICITY</scope>
    <scope>CATALYTIC ACTIVITY</scope>
    <scope>FUNCTION</scope>
</reference>
<reference key="15">
    <citation type="journal article" date="2020" name="J. Biol. Chem.">
        <title>Peroxidasin mediates bromination of tyrosine residues in the extracellular matrix.</title>
        <authorList>
            <person name="Bathish B."/>
            <person name="Paumann-Page M."/>
            <person name="Paton L.N."/>
            <person name="Kettle A.J."/>
            <person name="Winterbourn C.C."/>
        </authorList>
    </citation>
    <scope>FUNCTION</scope>
    <scope>CATALYTIC ACTIVITY</scope>
    <scope>ACTIVITY REGULATION</scope>
</reference>
<reference key="16">
    <citation type="journal article" date="2020" name="Proc. Natl. Acad. Sci. U.S.A.">
        <title>Peroxidasin-mediated bromine enrichment of basement membranes.</title>
        <authorList>
            <person name="He C."/>
            <person name="Song W."/>
            <person name="Weston T.A."/>
            <person name="Tran C."/>
            <person name="Kurtz I."/>
            <person name="Zuckerman J.E."/>
            <person name="Guagliardo P."/>
            <person name="Miner J.H."/>
            <person name="Ivanov S.V."/>
            <person name="Bougoure J."/>
            <person name="Hudson B.G."/>
            <person name="Colon S."/>
            <person name="Voziyan P.A."/>
            <person name="Bhave G."/>
            <person name="Fong L.G."/>
            <person name="Young S.G."/>
            <person name="Jiang H."/>
        </authorList>
    </citation>
    <scope>FUNCTION</scope>
    <scope>CATALYTIC ACTIVITY</scope>
</reference>
<reference key="17">
    <citation type="journal article" date="2021" name="Antioxidants">
        <title>Characterization of the Proprotein Convertase-Mediated Processing of Peroxidasin and Peroxidasin-like Protein.</title>
        <authorList>
            <person name="Kovacs H.A."/>
            <person name="Lazar E."/>
            <person name="Varady G."/>
            <person name="Sirokmany G."/>
            <person name="Geiszt M."/>
        </authorList>
    </citation>
    <scope>PROTEOLYTIC CLEAVAGE</scope>
</reference>
<organism>
    <name type="scientific">Mus musculus</name>
    <name type="common">Mouse</name>
    <dbReference type="NCBI Taxonomy" id="10090"/>
    <lineage>
        <taxon>Eukaryota</taxon>
        <taxon>Metazoa</taxon>
        <taxon>Chordata</taxon>
        <taxon>Craniata</taxon>
        <taxon>Vertebrata</taxon>
        <taxon>Euteleostomi</taxon>
        <taxon>Mammalia</taxon>
        <taxon>Eutheria</taxon>
        <taxon>Euarchontoglires</taxon>
        <taxon>Glires</taxon>
        <taxon>Rodentia</taxon>
        <taxon>Myomorpha</taxon>
        <taxon>Muroidea</taxon>
        <taxon>Muridae</taxon>
        <taxon>Murinae</taxon>
        <taxon>Mus</taxon>
        <taxon>Mus</taxon>
    </lineage>
</organism>
<dbReference type="EC" id="1.11.2.-" evidence="10 14 16 17"/>
<dbReference type="EMBL" id="AK142872">
    <property type="protein sequence ID" value="BAE25216.1"/>
    <property type="molecule type" value="mRNA"/>
</dbReference>
<dbReference type="EMBL" id="AC159626">
    <property type="status" value="NOT_ANNOTATED_CDS"/>
    <property type="molecule type" value="Genomic_DNA"/>
</dbReference>
<dbReference type="EMBL" id="AC165078">
    <property type="status" value="NOT_ANNOTATED_CDS"/>
    <property type="molecule type" value="Genomic_DNA"/>
</dbReference>
<dbReference type="EMBL" id="BC112913">
    <property type="protein sequence ID" value="AAI12914.1"/>
    <property type="molecule type" value="mRNA"/>
</dbReference>
<dbReference type="CCDS" id="CCDS25856.1"/>
<dbReference type="RefSeq" id="NP_852060.2">
    <property type="nucleotide sequence ID" value="NM_181395.2"/>
</dbReference>
<dbReference type="SMR" id="Q3UQ28"/>
<dbReference type="BioGRID" id="213608">
    <property type="interactions" value="4"/>
</dbReference>
<dbReference type="FunCoup" id="Q3UQ28">
    <property type="interactions" value="277"/>
</dbReference>
<dbReference type="STRING" id="10090.ENSMUSP00000113703"/>
<dbReference type="GlyConnect" id="2580">
    <property type="glycosylation" value="2 N-Linked glycans (2 sites)"/>
</dbReference>
<dbReference type="GlyCosmos" id="Q3UQ28">
    <property type="glycosylation" value="9 sites, 2 glycans"/>
</dbReference>
<dbReference type="GlyGen" id="Q3UQ28">
    <property type="glycosylation" value="10 sites, 4 N-linked glycans (4 sites)"/>
</dbReference>
<dbReference type="iPTMnet" id="Q3UQ28"/>
<dbReference type="PhosphoSitePlus" id="Q3UQ28"/>
<dbReference type="PaxDb" id="10090-ENSMUSP00000113703"/>
<dbReference type="ProteomicsDB" id="300361"/>
<dbReference type="Pumba" id="Q3UQ28"/>
<dbReference type="Antibodypedia" id="2426">
    <property type="antibodies" value="72 antibodies from 16 providers"/>
</dbReference>
<dbReference type="Ensembl" id="ENSMUST00000122328.8">
    <property type="protein sequence ID" value="ENSMUSP00000113703.2"/>
    <property type="gene ID" value="ENSMUSG00000020674.18"/>
</dbReference>
<dbReference type="GeneID" id="69675"/>
<dbReference type="KEGG" id="mmu:69675"/>
<dbReference type="UCSC" id="uc007ngl.2">
    <property type="organism name" value="mouse"/>
</dbReference>
<dbReference type="AGR" id="MGI:1916925"/>
<dbReference type="CTD" id="7837"/>
<dbReference type="MGI" id="MGI:1916925">
    <property type="gene designation" value="Pxdn"/>
</dbReference>
<dbReference type="VEuPathDB" id="HostDB:ENSMUSG00000020674"/>
<dbReference type="eggNOG" id="KOG2408">
    <property type="taxonomic scope" value="Eukaryota"/>
</dbReference>
<dbReference type="GeneTree" id="ENSGT00940000157666"/>
<dbReference type="HOGENOM" id="CLU_006087_0_1_1"/>
<dbReference type="InParanoid" id="Q3UQ28"/>
<dbReference type="OMA" id="MECRRNR"/>
<dbReference type="OrthoDB" id="823504at2759"/>
<dbReference type="PhylomeDB" id="Q3UQ28"/>
<dbReference type="TreeFam" id="TF314316"/>
<dbReference type="Reactome" id="R-MMU-2243919">
    <property type="pathway name" value="Crosslinking of collagen fibrils"/>
</dbReference>
<dbReference type="BioGRID-ORCS" id="69675">
    <property type="hits" value="1 hit in 80 CRISPR screens"/>
</dbReference>
<dbReference type="ChiTaRS" id="Pxdn">
    <property type="organism name" value="mouse"/>
</dbReference>
<dbReference type="PRO" id="PR:Q3UQ28"/>
<dbReference type="Proteomes" id="UP000000589">
    <property type="component" value="Chromosome 12"/>
</dbReference>
<dbReference type="RNAct" id="Q3UQ28">
    <property type="molecule type" value="protein"/>
</dbReference>
<dbReference type="Bgee" id="ENSMUSG00000020674">
    <property type="expression patterns" value="Expressed in manus and 220 other cell types or tissues"/>
</dbReference>
<dbReference type="ExpressionAtlas" id="Q3UQ28">
    <property type="expression patterns" value="baseline and differential"/>
</dbReference>
<dbReference type="GO" id="GO:0005604">
    <property type="term" value="C:basement membrane"/>
    <property type="evidence" value="ECO:0000314"/>
    <property type="project" value="UniProtKB"/>
</dbReference>
<dbReference type="GO" id="GO:0009986">
    <property type="term" value="C:cell surface"/>
    <property type="evidence" value="ECO:0000250"/>
    <property type="project" value="UniProtKB"/>
</dbReference>
<dbReference type="GO" id="GO:0062023">
    <property type="term" value="C:collagen-containing extracellular matrix"/>
    <property type="evidence" value="ECO:0000314"/>
    <property type="project" value="UniProtKB"/>
</dbReference>
<dbReference type="GO" id="GO:0005783">
    <property type="term" value="C:endoplasmic reticulum"/>
    <property type="evidence" value="ECO:0000250"/>
    <property type="project" value="UniProtKB"/>
</dbReference>
<dbReference type="GO" id="GO:0005615">
    <property type="term" value="C:extracellular space"/>
    <property type="evidence" value="ECO:0007005"/>
    <property type="project" value="BHF-UCL"/>
</dbReference>
<dbReference type="GO" id="GO:0005201">
    <property type="term" value="F:extracellular matrix structural constituent"/>
    <property type="evidence" value="ECO:0007669"/>
    <property type="project" value="Ensembl"/>
</dbReference>
<dbReference type="GO" id="GO:0020037">
    <property type="term" value="F:heme binding"/>
    <property type="evidence" value="ECO:0000250"/>
    <property type="project" value="UniProtKB"/>
</dbReference>
<dbReference type="GO" id="GO:0140825">
    <property type="term" value="F:lactoperoxidase activity"/>
    <property type="evidence" value="ECO:0007669"/>
    <property type="project" value="UniProtKB-EC"/>
</dbReference>
<dbReference type="GO" id="GO:0043237">
    <property type="term" value="F:laminin-1 binding"/>
    <property type="evidence" value="ECO:0000250"/>
    <property type="project" value="UniProtKB"/>
</dbReference>
<dbReference type="GO" id="GO:0046872">
    <property type="term" value="F:metal ion binding"/>
    <property type="evidence" value="ECO:0007669"/>
    <property type="project" value="UniProtKB-KW"/>
</dbReference>
<dbReference type="GO" id="GO:0016684">
    <property type="term" value="F:oxidoreductase activity, acting on peroxide as acceptor"/>
    <property type="evidence" value="ECO:0000314"/>
    <property type="project" value="UniProtKB"/>
</dbReference>
<dbReference type="GO" id="GO:0004601">
    <property type="term" value="F:peroxidase activity"/>
    <property type="evidence" value="ECO:0000250"/>
    <property type="project" value="UniProtKB"/>
</dbReference>
<dbReference type="GO" id="GO:0001525">
    <property type="term" value="P:angiogenesis"/>
    <property type="evidence" value="ECO:0000250"/>
    <property type="project" value="UniProtKB"/>
</dbReference>
<dbReference type="GO" id="GO:0070831">
    <property type="term" value="P:basement membrane assembly"/>
    <property type="evidence" value="ECO:0000314"/>
    <property type="project" value="UniProtKB"/>
</dbReference>
<dbReference type="GO" id="GO:0071711">
    <property type="term" value="P:basement membrane organization"/>
    <property type="evidence" value="ECO:0000315"/>
    <property type="project" value="UniProtKB"/>
</dbReference>
<dbReference type="GO" id="GO:0007155">
    <property type="term" value="P:cell adhesion"/>
    <property type="evidence" value="ECO:0000315"/>
    <property type="project" value="UniProtKB"/>
</dbReference>
<dbReference type="GO" id="GO:0030199">
    <property type="term" value="P:collagen fibril organization"/>
    <property type="evidence" value="ECO:0007669"/>
    <property type="project" value="Ensembl"/>
</dbReference>
<dbReference type="GO" id="GO:0030198">
    <property type="term" value="P:extracellular matrix organization"/>
    <property type="evidence" value="ECO:0000314"/>
    <property type="project" value="UniProtKB"/>
</dbReference>
<dbReference type="GO" id="GO:0001654">
    <property type="term" value="P:eye development"/>
    <property type="evidence" value="ECO:0000315"/>
    <property type="project" value="UniProtKB"/>
</dbReference>
<dbReference type="GO" id="GO:0042744">
    <property type="term" value="P:hydrogen peroxide catabolic process"/>
    <property type="evidence" value="ECO:0000250"/>
    <property type="project" value="UniProtKB"/>
</dbReference>
<dbReference type="GO" id="GO:0051260">
    <property type="term" value="P:protein homooligomerization"/>
    <property type="evidence" value="ECO:0000250"/>
    <property type="project" value="UniProtKB"/>
</dbReference>
<dbReference type="GO" id="GO:0070207">
    <property type="term" value="P:protein homotrimerization"/>
    <property type="evidence" value="ECO:0000250"/>
    <property type="project" value="UniProtKB"/>
</dbReference>
<dbReference type="GO" id="GO:0006979">
    <property type="term" value="P:response to oxidative stress"/>
    <property type="evidence" value="ECO:0007669"/>
    <property type="project" value="InterPro"/>
</dbReference>
<dbReference type="CDD" id="cd05745">
    <property type="entry name" value="Ig3_Peroxidasin"/>
    <property type="match status" value="1"/>
</dbReference>
<dbReference type="CDD" id="cd05746">
    <property type="entry name" value="Ig4_Peroxidasin"/>
    <property type="match status" value="1"/>
</dbReference>
<dbReference type="CDD" id="cd09826">
    <property type="entry name" value="peroxidasin_like"/>
    <property type="match status" value="1"/>
</dbReference>
<dbReference type="FunFam" id="1.10.640.10:FF:000001">
    <property type="entry name" value="Peroxidasin homolog"/>
    <property type="match status" value="1"/>
</dbReference>
<dbReference type="FunFam" id="2.60.40.10:FF:000163">
    <property type="entry name" value="peroxidasin homolog"/>
    <property type="match status" value="1"/>
</dbReference>
<dbReference type="FunFam" id="2.60.40.10:FF:000248">
    <property type="entry name" value="peroxidasin homolog"/>
    <property type="match status" value="1"/>
</dbReference>
<dbReference type="FunFam" id="2.60.40.10:FF:000276">
    <property type="entry name" value="peroxidasin homolog"/>
    <property type="match status" value="1"/>
</dbReference>
<dbReference type="FunFam" id="2.60.40.10:FF:000282">
    <property type="entry name" value="peroxidasin homolog"/>
    <property type="match status" value="1"/>
</dbReference>
<dbReference type="FunFam" id="3.80.10.10:FF:000071">
    <property type="entry name" value="peroxidasin homolog"/>
    <property type="match status" value="1"/>
</dbReference>
<dbReference type="Gene3D" id="6.20.200.20">
    <property type="match status" value="1"/>
</dbReference>
<dbReference type="Gene3D" id="1.10.640.10">
    <property type="entry name" value="Haem peroxidase domain superfamily, animal type"/>
    <property type="match status" value="1"/>
</dbReference>
<dbReference type="Gene3D" id="2.60.40.10">
    <property type="entry name" value="Immunoglobulins"/>
    <property type="match status" value="4"/>
</dbReference>
<dbReference type="Gene3D" id="3.80.10.10">
    <property type="entry name" value="Ribonuclease Inhibitor"/>
    <property type="match status" value="1"/>
</dbReference>
<dbReference type="InterPro" id="IPR000483">
    <property type="entry name" value="Cys-rich_flank_reg_C"/>
</dbReference>
<dbReference type="InterPro" id="IPR019791">
    <property type="entry name" value="Haem_peroxidase_animal"/>
</dbReference>
<dbReference type="InterPro" id="IPR010255">
    <property type="entry name" value="Haem_peroxidase_sf"/>
</dbReference>
<dbReference type="InterPro" id="IPR037120">
    <property type="entry name" value="Haem_peroxidase_sf_animal"/>
</dbReference>
<dbReference type="InterPro" id="IPR007110">
    <property type="entry name" value="Ig-like_dom"/>
</dbReference>
<dbReference type="InterPro" id="IPR036179">
    <property type="entry name" value="Ig-like_dom_sf"/>
</dbReference>
<dbReference type="InterPro" id="IPR013783">
    <property type="entry name" value="Ig-like_fold"/>
</dbReference>
<dbReference type="InterPro" id="IPR013098">
    <property type="entry name" value="Ig_I-set"/>
</dbReference>
<dbReference type="InterPro" id="IPR003599">
    <property type="entry name" value="Ig_sub"/>
</dbReference>
<dbReference type="InterPro" id="IPR003598">
    <property type="entry name" value="Ig_sub2"/>
</dbReference>
<dbReference type="InterPro" id="IPR013106">
    <property type="entry name" value="Ig_V-set"/>
</dbReference>
<dbReference type="InterPro" id="IPR001611">
    <property type="entry name" value="Leu-rich_rpt"/>
</dbReference>
<dbReference type="InterPro" id="IPR003591">
    <property type="entry name" value="Leu-rich_rpt_typical-subtyp"/>
</dbReference>
<dbReference type="InterPro" id="IPR032675">
    <property type="entry name" value="LRR_dom_sf"/>
</dbReference>
<dbReference type="InterPro" id="IPR047018">
    <property type="entry name" value="Peroxidasin_Ig-like3"/>
</dbReference>
<dbReference type="InterPro" id="IPR034828">
    <property type="entry name" value="Peroxidasin_Ig-like4"/>
</dbReference>
<dbReference type="InterPro" id="IPR034824">
    <property type="entry name" value="Peroxidasin_peroxidase"/>
</dbReference>
<dbReference type="InterPro" id="IPR001007">
    <property type="entry name" value="VWF_dom"/>
</dbReference>
<dbReference type="PANTHER" id="PTHR11475">
    <property type="entry name" value="OXIDASE/PEROXIDASE"/>
    <property type="match status" value="1"/>
</dbReference>
<dbReference type="PANTHER" id="PTHR11475:SF75">
    <property type="entry name" value="PEROXIDASIN HOMOLOG"/>
    <property type="match status" value="1"/>
</dbReference>
<dbReference type="Pfam" id="PF03098">
    <property type="entry name" value="An_peroxidase"/>
    <property type="match status" value="1"/>
</dbReference>
<dbReference type="Pfam" id="PF07679">
    <property type="entry name" value="I-set"/>
    <property type="match status" value="4"/>
</dbReference>
<dbReference type="Pfam" id="PF00560">
    <property type="entry name" value="LRR_1"/>
    <property type="match status" value="1"/>
</dbReference>
<dbReference type="Pfam" id="PF13855">
    <property type="entry name" value="LRR_8"/>
    <property type="match status" value="1"/>
</dbReference>
<dbReference type="Pfam" id="PF00093">
    <property type="entry name" value="VWC"/>
    <property type="match status" value="1"/>
</dbReference>
<dbReference type="PRINTS" id="PR00457">
    <property type="entry name" value="ANPEROXIDASE"/>
</dbReference>
<dbReference type="SMART" id="SM00409">
    <property type="entry name" value="IG"/>
    <property type="match status" value="4"/>
</dbReference>
<dbReference type="SMART" id="SM00408">
    <property type="entry name" value="IGc2"/>
    <property type="match status" value="4"/>
</dbReference>
<dbReference type="SMART" id="SM00406">
    <property type="entry name" value="IGv"/>
    <property type="match status" value="3"/>
</dbReference>
<dbReference type="SMART" id="SM00369">
    <property type="entry name" value="LRR_TYP"/>
    <property type="match status" value="5"/>
</dbReference>
<dbReference type="SMART" id="SM00082">
    <property type="entry name" value="LRRCT"/>
    <property type="match status" value="1"/>
</dbReference>
<dbReference type="SMART" id="SM00214">
    <property type="entry name" value="VWC"/>
    <property type="match status" value="1"/>
</dbReference>
<dbReference type="SUPFAM" id="SSF57603">
    <property type="entry name" value="FnI-like domain"/>
    <property type="match status" value="1"/>
</dbReference>
<dbReference type="SUPFAM" id="SSF48113">
    <property type="entry name" value="Heme-dependent peroxidases"/>
    <property type="match status" value="1"/>
</dbReference>
<dbReference type="SUPFAM" id="SSF48726">
    <property type="entry name" value="Immunoglobulin"/>
    <property type="match status" value="4"/>
</dbReference>
<dbReference type="SUPFAM" id="SSF52058">
    <property type="entry name" value="L domain-like"/>
    <property type="match status" value="1"/>
</dbReference>
<dbReference type="PROSITE" id="PS50835">
    <property type="entry name" value="IG_LIKE"/>
    <property type="match status" value="4"/>
</dbReference>
<dbReference type="PROSITE" id="PS51450">
    <property type="entry name" value="LRR"/>
    <property type="match status" value="5"/>
</dbReference>
<dbReference type="PROSITE" id="PS50292">
    <property type="entry name" value="PEROXIDASE_3"/>
    <property type="match status" value="1"/>
</dbReference>
<dbReference type="PROSITE" id="PS01208">
    <property type="entry name" value="VWFC_1"/>
    <property type="match status" value="1"/>
</dbReference>
<dbReference type="PROSITE" id="PS50184">
    <property type="entry name" value="VWFC_2"/>
    <property type="match status" value="1"/>
</dbReference>
<sequence>MAVRPTRRCLLALLLCFAWWAMAVVASKQGAGCPSRCLCFRTTVRCMHLLLEAVPAVAPQTSILDLRFNRIREIQPGAFRRLRSLNTLLLNNNQIKKIPNGAFEDLENLKYLYLYKNEIQSIDRQAFKGLASLEQLYLHFNQIETLDPESFQHLPKLERLFLHNNRITHLVPGTFSQLESMKRLRLDSNALHCDCEILWLADLLKTYAQSGNAQAAATCEYPRRIQGRSVATITPEELNCERPRITSEPQDADVTSGNTVYFTCRAEGNPKPEIIWLRNNNELSMKTDSRLNLLDDGTLMIQNTQEADEGVYQCMAKNVAGEAKTQEVTLRYLGSPARPTFVIQPQNTEVLVGESVTLECSATGHPLPQITWTRGDRTPLPIDPRVNITPSGGLYIQNVAQSDSGEYTCFASNSVDSIHATAFIIVQALPQFTVTPQSRVVIEGQTVDFQCAAKGHPQPVIAWTKGGSQLSVDRRHLVLSSGTLRISGVALHDQGQYECQAVNIIGSQKVVAHLTVQPRVTPVFASIPSDMTVEVGTNVQLPCSSQGEPEPAITWNKDGVQVTESGKFHISPEGFLTINDVGTADAGRYECVARNTIGYASVSMVLSVNVPDVSRNGDPYVATSIVEAIATVDRAINSTRTHLFDSRPRSPNDLLALFRYPRDPYTVGQARAGEIFERTLQLIQEHVQHGLMVDLNGTSYHYNDLVSPQYLSLIANLSGCTAHRRVNNCSDMCFHQKYRTHDGTCNNLQHPMWGASLTAFERLLKAVYENGFNTPRGINSQRQYNGHVLPMPRLVSTTLIGTEVITPDEQFTHMLMQWGQFLDHDLDSTVVALSQARFSDGQHCSSVCSNDPPCFSVMIPPNDPRVRSGARCMFFVRSSPVCGSGMTSLLMNSVYPREQINQLTSYIDASNVYGSTDHEARSIRDLASHRGLLRQGIVQRSGKPLLPFATGPPTECMRDENESPIPCFLAGDHRANEQLGLTSMHTLWFREHNRIAAELLKLNPHWDGDTVYHETRKIVGAEIQHITYRHWLPKILGEVGMKMLGEYRGYDPSVNAGIFNAFATAAFRFGHTLINPLLYRLDENFEPIPQGHVPLHKAFFSPFRIVNEGGIDPLLRGLFGVAGKMRIPSQLLNTELTERLFSMAHTVALDLAAINIQRGRDHGIPPYHDYRVYCNLSAAYTFEDLKNEIKSPVIREKLQRLYGSTLNIDLFPALMVEDLVPGSRLGPTLMCLLSTQFRRLRDGDRLWYENPGVFSPAQLTQLKQTSLARILCDNSDNITRVQQDVFRVAEFPHGYSSCEDIPRVDLRVWQDCCEDCRTRGQFNAFSYHFRGRRSLEFSYEDDKPTKRARWRKALSVKHGKHLSNATSATHEHLEGPATNDLKEFVLEMQKIITDLRKQINSLESRLSTTECVDDSGESHGGNTKWKKDPCTVCECKNGQITCFVEACQPAACPQPVKVEGACCPVCLKNTAEEKP</sequence>
<protein>
    <recommendedName>
        <fullName evidence="19">Peroxidasin homolog</fullName>
        <ecNumber evidence="10 14 16 17">1.11.2.-</ecNumber>
    </recommendedName>
    <component>
        <recommendedName>
            <fullName evidence="1">PXDN active fragment</fullName>
        </recommendedName>
    </component>
</protein>
<proteinExistence type="evidence at protein level"/>
<keyword id="KW-0084">Basement membrane</keyword>
<keyword id="KW-0106">Calcium</keyword>
<keyword id="KW-1015">Disulfide bond</keyword>
<keyword id="KW-0256">Endoplasmic reticulum</keyword>
<keyword id="KW-0272">Extracellular matrix</keyword>
<keyword id="KW-0325">Glycoprotein</keyword>
<keyword id="KW-0349">Heme</keyword>
<keyword id="KW-0376">Hydrogen peroxide</keyword>
<keyword id="KW-0393">Immunoglobulin domain</keyword>
<keyword id="KW-0408">Iron</keyword>
<keyword id="KW-0433">Leucine-rich repeat</keyword>
<keyword id="KW-0479">Metal-binding</keyword>
<keyword id="KW-0560">Oxidoreductase</keyword>
<keyword id="KW-0575">Peroxidase</keyword>
<keyword id="KW-0597">Phosphoprotein</keyword>
<keyword id="KW-1185">Reference proteome</keyword>
<keyword id="KW-0677">Repeat</keyword>
<keyword id="KW-0964">Secreted</keyword>
<keyword id="KW-0732">Signal</keyword>
<evidence type="ECO:0000250" key="1">
    <source>
        <dbReference type="UniProtKB" id="Q92626"/>
    </source>
</evidence>
<evidence type="ECO:0000255" key="2"/>
<evidence type="ECO:0000255" key="3">
    <source>
        <dbReference type="PROSITE-ProRule" id="PRU00114"/>
    </source>
</evidence>
<evidence type="ECO:0000255" key="4">
    <source>
        <dbReference type="PROSITE-ProRule" id="PRU00220"/>
    </source>
</evidence>
<evidence type="ECO:0000255" key="5">
    <source>
        <dbReference type="PROSITE-ProRule" id="PRU00298"/>
    </source>
</evidence>
<evidence type="ECO:0000269" key="6">
    <source>
    </source>
</evidence>
<evidence type="ECO:0000269" key="7">
    <source>
    </source>
</evidence>
<evidence type="ECO:0000269" key="8">
    <source>
    </source>
</evidence>
<evidence type="ECO:0000269" key="9">
    <source>
    </source>
</evidence>
<evidence type="ECO:0000269" key="10">
    <source>
    </source>
</evidence>
<evidence type="ECO:0000269" key="11">
    <source>
    </source>
</evidence>
<evidence type="ECO:0000269" key="12">
    <source>
    </source>
</evidence>
<evidence type="ECO:0000269" key="13">
    <source>
    </source>
</evidence>
<evidence type="ECO:0000269" key="14">
    <source>
    </source>
</evidence>
<evidence type="ECO:0000269" key="15">
    <source>
    </source>
</evidence>
<evidence type="ECO:0000269" key="16">
    <source>
    </source>
</evidence>
<evidence type="ECO:0000269" key="17">
    <source>
    </source>
</evidence>
<evidence type="ECO:0000269" key="18">
    <source>
    </source>
</evidence>
<evidence type="ECO:0000305" key="19"/>
<evidence type="ECO:0000305" key="20">
    <source>
    </source>
</evidence>
<evidence type="ECO:0000305" key="21">
    <source>
    </source>
</evidence>
<evidence type="ECO:0000305" key="22">
    <source>
    </source>
</evidence>
<evidence type="ECO:0000312" key="23">
    <source>
        <dbReference type="MGI" id="MGI:1916925"/>
    </source>
</evidence>
<accession>Q3UQ28</accession>
<accession>A4FU83</accession>
<accession>E9QNQ9</accession>
<gene>
    <name evidence="23" type="primary">Pxdn</name>
    <name type="synonym">Kiaa0230</name>
</gene>
<name>PXDN_MOUSE</name>